<evidence type="ECO:0000255" key="1">
    <source>
        <dbReference type="HAMAP-Rule" id="MF_00054"/>
    </source>
</evidence>
<comment type="function">
    <text evidence="1">Catalyzes the GTP-dependent ribosomal translocation step during translation elongation. During this step, the ribosome changes from the pre-translocational (PRE) to the post-translocational (POST) state as the newly formed A-site-bound peptidyl-tRNA and P-site-bound deacylated tRNA move to the P and E sites, respectively. Catalyzes the coordinated movement of the two tRNA molecules, the mRNA and conformational changes in the ribosome.</text>
</comment>
<comment type="subcellular location">
    <subcellularLocation>
        <location evidence="1">Cytoplasm</location>
    </subcellularLocation>
</comment>
<comment type="similarity">
    <text evidence="1">Belongs to the TRAFAC class translation factor GTPase superfamily. Classic translation factor GTPase family. EF-G/EF-2 subfamily.</text>
</comment>
<sequence length="699" mass="77986">MAREYKIEDYRNFGIMAHIDAGKTTTTERILYYTGKSHKIGEVHDGAATMDWMEQEQERGITITSAATTTFWKGRDGKMRRFNIIDTPGHVDFTIEVERSLRVLDGAIALLDANAGVEPQTETVWRQAEKYNVPRMIFCNKMDKTGADFYRSVEMIKTRLGATAVVMQLPIGAETEFKGVIDLIEMNALIWRDESLGAQWDVVEIPDDLKAKADEYREKLIETVVEIDEEAMEDYLNGIMPDNDKIRALVRRGTIDVKFHPMFCGTAFKNKGVQPLLDAVVDYLPSPLDIPAIKGIDFKTEAEIERHADDSEPLSMLAFKIMNDPFVGSLTFARIYSGKLEKGTSVINTVKDKRERVGRMLQMHSNSREDIEEAFAGDIVALAGLKETTTGDTLCDPLKPVILERMEFPEPVIQIAIEPKTKGDQEKMGLALNRLAAEDPSFRVKTDEESGQTIIAGMGELHLDILVDRMRREFKVEATVGAPQVAYRETITRQHEEDYTHKKQSGGTGQFARVKIIFEPNPEGEDFKFESKIVGGAVPKEYIPGVQKGIESVLSSGPLAGFPMLGVKATLIDGAYHDVDSSVLAFEIASRACFREAAKKAGAQLLEPMMKVEVVTPEDYVGDVIGDLNSRRGQIQGQESRGITIVISAHVPLANMFKYVDNLRSMSQGRAQYSMTFDHYSPVPSNVAQEIQAKYSGQK</sequence>
<reference key="1">
    <citation type="journal article" date="2001" name="Science">
        <title>The genome of the natural genetic engineer Agrobacterium tumefaciens C58.</title>
        <authorList>
            <person name="Wood D.W."/>
            <person name="Setubal J.C."/>
            <person name="Kaul R."/>
            <person name="Monks D.E."/>
            <person name="Kitajima J.P."/>
            <person name="Okura V.K."/>
            <person name="Zhou Y."/>
            <person name="Chen L."/>
            <person name="Wood G.E."/>
            <person name="Almeida N.F. Jr."/>
            <person name="Woo L."/>
            <person name="Chen Y."/>
            <person name="Paulsen I.T."/>
            <person name="Eisen J.A."/>
            <person name="Karp P.D."/>
            <person name="Bovee D. Sr."/>
            <person name="Chapman P."/>
            <person name="Clendenning J."/>
            <person name="Deatherage G."/>
            <person name="Gillet W."/>
            <person name="Grant C."/>
            <person name="Kutyavin T."/>
            <person name="Levy R."/>
            <person name="Li M.-J."/>
            <person name="McClelland E."/>
            <person name="Palmieri A."/>
            <person name="Raymond C."/>
            <person name="Rouse G."/>
            <person name="Saenphimmachak C."/>
            <person name="Wu Z."/>
            <person name="Romero P."/>
            <person name="Gordon D."/>
            <person name="Zhang S."/>
            <person name="Yoo H."/>
            <person name="Tao Y."/>
            <person name="Biddle P."/>
            <person name="Jung M."/>
            <person name="Krespan W."/>
            <person name="Perry M."/>
            <person name="Gordon-Kamm B."/>
            <person name="Liao L."/>
            <person name="Kim S."/>
            <person name="Hendrick C."/>
            <person name="Zhao Z.-Y."/>
            <person name="Dolan M."/>
            <person name="Chumley F."/>
            <person name="Tingey S.V."/>
            <person name="Tomb J.-F."/>
            <person name="Gordon M.P."/>
            <person name="Olson M.V."/>
            <person name="Nester E.W."/>
        </authorList>
    </citation>
    <scope>NUCLEOTIDE SEQUENCE [LARGE SCALE GENOMIC DNA]</scope>
    <source>
        <strain>C58 / ATCC 33970</strain>
    </source>
</reference>
<reference key="2">
    <citation type="journal article" date="2001" name="Science">
        <title>Genome sequence of the plant pathogen and biotechnology agent Agrobacterium tumefaciens C58.</title>
        <authorList>
            <person name="Goodner B."/>
            <person name="Hinkle G."/>
            <person name="Gattung S."/>
            <person name="Miller N."/>
            <person name="Blanchard M."/>
            <person name="Qurollo B."/>
            <person name="Goldman B.S."/>
            <person name="Cao Y."/>
            <person name="Askenazi M."/>
            <person name="Halling C."/>
            <person name="Mullin L."/>
            <person name="Houmiel K."/>
            <person name="Gordon J."/>
            <person name="Vaudin M."/>
            <person name="Iartchouk O."/>
            <person name="Epp A."/>
            <person name="Liu F."/>
            <person name="Wollam C."/>
            <person name="Allinger M."/>
            <person name="Doughty D."/>
            <person name="Scott C."/>
            <person name="Lappas C."/>
            <person name="Markelz B."/>
            <person name="Flanagan C."/>
            <person name="Crowell C."/>
            <person name="Gurson J."/>
            <person name="Lomo C."/>
            <person name="Sear C."/>
            <person name="Strub G."/>
            <person name="Cielo C."/>
            <person name="Slater S."/>
        </authorList>
    </citation>
    <scope>NUCLEOTIDE SEQUENCE [LARGE SCALE GENOMIC DNA]</scope>
    <source>
        <strain>C58 / ATCC 33970</strain>
    </source>
</reference>
<name>EFG_AGRFC</name>
<keyword id="KW-0963">Cytoplasm</keyword>
<keyword id="KW-0251">Elongation factor</keyword>
<keyword id="KW-0342">GTP-binding</keyword>
<keyword id="KW-0547">Nucleotide-binding</keyword>
<keyword id="KW-0648">Protein biosynthesis</keyword>
<keyword id="KW-1185">Reference proteome</keyword>
<organism>
    <name type="scientific">Agrobacterium fabrum (strain C58 / ATCC 33970)</name>
    <name type="common">Agrobacterium tumefaciens (strain C58)</name>
    <dbReference type="NCBI Taxonomy" id="176299"/>
    <lineage>
        <taxon>Bacteria</taxon>
        <taxon>Pseudomonadati</taxon>
        <taxon>Pseudomonadota</taxon>
        <taxon>Alphaproteobacteria</taxon>
        <taxon>Hyphomicrobiales</taxon>
        <taxon>Rhizobiaceae</taxon>
        <taxon>Rhizobium/Agrobacterium group</taxon>
        <taxon>Agrobacterium</taxon>
        <taxon>Agrobacterium tumefaciens complex</taxon>
    </lineage>
</organism>
<gene>
    <name evidence="1" type="primary">fusA</name>
    <name type="ordered locus">Atu1949</name>
    <name type="ORF">AGR_C_3558</name>
</gene>
<dbReference type="EMBL" id="AE007869">
    <property type="protein sequence ID" value="AAK87710.1"/>
    <property type="molecule type" value="Genomic_DNA"/>
</dbReference>
<dbReference type="PIR" id="AC2816">
    <property type="entry name" value="AC2816"/>
</dbReference>
<dbReference type="PIR" id="E97594">
    <property type="entry name" value="E97594"/>
</dbReference>
<dbReference type="RefSeq" id="NP_354925.1">
    <property type="nucleotide sequence ID" value="NC_003062.2"/>
</dbReference>
<dbReference type="RefSeq" id="WP_006316468.1">
    <property type="nucleotide sequence ID" value="NC_003062.2"/>
</dbReference>
<dbReference type="SMR" id="Q8UE15"/>
<dbReference type="STRING" id="176299.Atu1949"/>
<dbReference type="EnsemblBacteria" id="AAK87710">
    <property type="protein sequence ID" value="AAK87710"/>
    <property type="gene ID" value="Atu1949"/>
</dbReference>
<dbReference type="GeneID" id="1133987"/>
<dbReference type="KEGG" id="atu:Atu1949"/>
<dbReference type="PATRIC" id="fig|176299.10.peg.1961"/>
<dbReference type="eggNOG" id="COG0480">
    <property type="taxonomic scope" value="Bacteria"/>
</dbReference>
<dbReference type="HOGENOM" id="CLU_002794_4_1_5"/>
<dbReference type="OrthoDB" id="9802948at2"/>
<dbReference type="PhylomeDB" id="Q8UE15"/>
<dbReference type="BioCyc" id="AGRO:ATU1949-MONOMER"/>
<dbReference type="Proteomes" id="UP000000813">
    <property type="component" value="Chromosome circular"/>
</dbReference>
<dbReference type="GO" id="GO:0005737">
    <property type="term" value="C:cytoplasm"/>
    <property type="evidence" value="ECO:0007669"/>
    <property type="project" value="UniProtKB-SubCell"/>
</dbReference>
<dbReference type="GO" id="GO:0005525">
    <property type="term" value="F:GTP binding"/>
    <property type="evidence" value="ECO:0007669"/>
    <property type="project" value="UniProtKB-UniRule"/>
</dbReference>
<dbReference type="GO" id="GO:0003924">
    <property type="term" value="F:GTPase activity"/>
    <property type="evidence" value="ECO:0007669"/>
    <property type="project" value="InterPro"/>
</dbReference>
<dbReference type="GO" id="GO:0003746">
    <property type="term" value="F:translation elongation factor activity"/>
    <property type="evidence" value="ECO:0007669"/>
    <property type="project" value="UniProtKB-UniRule"/>
</dbReference>
<dbReference type="GO" id="GO:0032790">
    <property type="term" value="P:ribosome disassembly"/>
    <property type="evidence" value="ECO:0007669"/>
    <property type="project" value="TreeGrafter"/>
</dbReference>
<dbReference type="CDD" id="cd01886">
    <property type="entry name" value="EF-G"/>
    <property type="match status" value="1"/>
</dbReference>
<dbReference type="CDD" id="cd16262">
    <property type="entry name" value="EFG_III"/>
    <property type="match status" value="1"/>
</dbReference>
<dbReference type="CDD" id="cd01434">
    <property type="entry name" value="EFG_mtEFG1_IV"/>
    <property type="match status" value="1"/>
</dbReference>
<dbReference type="CDD" id="cd03713">
    <property type="entry name" value="EFG_mtEFG_C"/>
    <property type="match status" value="1"/>
</dbReference>
<dbReference type="CDD" id="cd04088">
    <property type="entry name" value="EFG_mtEFG_II"/>
    <property type="match status" value="1"/>
</dbReference>
<dbReference type="FunFam" id="2.40.30.10:FF:000006">
    <property type="entry name" value="Elongation factor G"/>
    <property type="match status" value="1"/>
</dbReference>
<dbReference type="FunFam" id="3.30.230.10:FF:000003">
    <property type="entry name" value="Elongation factor G"/>
    <property type="match status" value="1"/>
</dbReference>
<dbReference type="FunFam" id="3.30.70.240:FF:000001">
    <property type="entry name" value="Elongation factor G"/>
    <property type="match status" value="1"/>
</dbReference>
<dbReference type="FunFam" id="3.30.70.870:FF:000001">
    <property type="entry name" value="Elongation factor G"/>
    <property type="match status" value="1"/>
</dbReference>
<dbReference type="FunFam" id="3.40.50.300:FF:000029">
    <property type="entry name" value="Elongation factor G"/>
    <property type="match status" value="1"/>
</dbReference>
<dbReference type="Gene3D" id="3.30.230.10">
    <property type="match status" value="1"/>
</dbReference>
<dbReference type="Gene3D" id="3.30.70.240">
    <property type="match status" value="1"/>
</dbReference>
<dbReference type="Gene3D" id="3.30.70.870">
    <property type="entry name" value="Elongation Factor G (Translational Gtpase), domain 3"/>
    <property type="match status" value="1"/>
</dbReference>
<dbReference type="Gene3D" id="3.40.50.300">
    <property type="entry name" value="P-loop containing nucleotide triphosphate hydrolases"/>
    <property type="match status" value="1"/>
</dbReference>
<dbReference type="Gene3D" id="2.40.30.10">
    <property type="entry name" value="Translation factors"/>
    <property type="match status" value="1"/>
</dbReference>
<dbReference type="HAMAP" id="MF_00054_B">
    <property type="entry name" value="EF_G_EF_2_B"/>
    <property type="match status" value="1"/>
</dbReference>
<dbReference type="InterPro" id="IPR053905">
    <property type="entry name" value="EF-G-like_DII"/>
</dbReference>
<dbReference type="InterPro" id="IPR041095">
    <property type="entry name" value="EFG_II"/>
</dbReference>
<dbReference type="InterPro" id="IPR009022">
    <property type="entry name" value="EFG_III"/>
</dbReference>
<dbReference type="InterPro" id="IPR035647">
    <property type="entry name" value="EFG_III/V"/>
</dbReference>
<dbReference type="InterPro" id="IPR047872">
    <property type="entry name" value="EFG_IV"/>
</dbReference>
<dbReference type="InterPro" id="IPR035649">
    <property type="entry name" value="EFG_V"/>
</dbReference>
<dbReference type="InterPro" id="IPR000640">
    <property type="entry name" value="EFG_V-like"/>
</dbReference>
<dbReference type="InterPro" id="IPR031157">
    <property type="entry name" value="G_TR_CS"/>
</dbReference>
<dbReference type="InterPro" id="IPR027417">
    <property type="entry name" value="P-loop_NTPase"/>
</dbReference>
<dbReference type="InterPro" id="IPR020568">
    <property type="entry name" value="Ribosomal_Su5_D2-typ_SF"/>
</dbReference>
<dbReference type="InterPro" id="IPR014721">
    <property type="entry name" value="Ribsml_uS5_D2-typ_fold_subgr"/>
</dbReference>
<dbReference type="InterPro" id="IPR005225">
    <property type="entry name" value="Small_GTP-bd"/>
</dbReference>
<dbReference type="InterPro" id="IPR000795">
    <property type="entry name" value="T_Tr_GTP-bd_dom"/>
</dbReference>
<dbReference type="InterPro" id="IPR009000">
    <property type="entry name" value="Transl_B-barrel_sf"/>
</dbReference>
<dbReference type="InterPro" id="IPR004540">
    <property type="entry name" value="Transl_elong_EFG/EF2"/>
</dbReference>
<dbReference type="InterPro" id="IPR005517">
    <property type="entry name" value="Transl_elong_EFG/EF2_IV"/>
</dbReference>
<dbReference type="NCBIfam" id="TIGR00484">
    <property type="entry name" value="EF-G"/>
    <property type="match status" value="1"/>
</dbReference>
<dbReference type="NCBIfam" id="NF009381">
    <property type="entry name" value="PRK12740.1-5"/>
    <property type="match status" value="1"/>
</dbReference>
<dbReference type="NCBIfam" id="TIGR00231">
    <property type="entry name" value="small_GTP"/>
    <property type="match status" value="1"/>
</dbReference>
<dbReference type="PANTHER" id="PTHR43261:SF1">
    <property type="entry name" value="RIBOSOME-RELEASING FACTOR 2, MITOCHONDRIAL"/>
    <property type="match status" value="1"/>
</dbReference>
<dbReference type="PANTHER" id="PTHR43261">
    <property type="entry name" value="TRANSLATION ELONGATION FACTOR G-RELATED"/>
    <property type="match status" value="1"/>
</dbReference>
<dbReference type="Pfam" id="PF22042">
    <property type="entry name" value="EF-G_D2"/>
    <property type="match status" value="1"/>
</dbReference>
<dbReference type="Pfam" id="PF00679">
    <property type="entry name" value="EFG_C"/>
    <property type="match status" value="1"/>
</dbReference>
<dbReference type="Pfam" id="PF14492">
    <property type="entry name" value="EFG_III"/>
    <property type="match status" value="1"/>
</dbReference>
<dbReference type="Pfam" id="PF03764">
    <property type="entry name" value="EFG_IV"/>
    <property type="match status" value="1"/>
</dbReference>
<dbReference type="Pfam" id="PF00009">
    <property type="entry name" value="GTP_EFTU"/>
    <property type="match status" value="1"/>
</dbReference>
<dbReference type="PRINTS" id="PR00315">
    <property type="entry name" value="ELONGATNFCT"/>
</dbReference>
<dbReference type="SMART" id="SM00838">
    <property type="entry name" value="EFG_C"/>
    <property type="match status" value="1"/>
</dbReference>
<dbReference type="SMART" id="SM00889">
    <property type="entry name" value="EFG_IV"/>
    <property type="match status" value="1"/>
</dbReference>
<dbReference type="SUPFAM" id="SSF54980">
    <property type="entry name" value="EF-G C-terminal domain-like"/>
    <property type="match status" value="2"/>
</dbReference>
<dbReference type="SUPFAM" id="SSF52540">
    <property type="entry name" value="P-loop containing nucleoside triphosphate hydrolases"/>
    <property type="match status" value="1"/>
</dbReference>
<dbReference type="SUPFAM" id="SSF54211">
    <property type="entry name" value="Ribosomal protein S5 domain 2-like"/>
    <property type="match status" value="1"/>
</dbReference>
<dbReference type="SUPFAM" id="SSF50447">
    <property type="entry name" value="Translation proteins"/>
    <property type="match status" value="1"/>
</dbReference>
<dbReference type="PROSITE" id="PS00301">
    <property type="entry name" value="G_TR_1"/>
    <property type="match status" value="1"/>
</dbReference>
<dbReference type="PROSITE" id="PS51722">
    <property type="entry name" value="G_TR_2"/>
    <property type="match status" value="1"/>
</dbReference>
<feature type="chain" id="PRO_0000091053" description="Elongation factor G">
    <location>
        <begin position="1"/>
        <end position="699"/>
    </location>
</feature>
<feature type="domain" description="tr-type G">
    <location>
        <begin position="8"/>
        <end position="288"/>
    </location>
</feature>
<feature type="binding site" evidence="1">
    <location>
        <begin position="17"/>
        <end position="24"/>
    </location>
    <ligand>
        <name>GTP</name>
        <dbReference type="ChEBI" id="CHEBI:37565"/>
    </ligand>
</feature>
<feature type="binding site" evidence="1">
    <location>
        <begin position="86"/>
        <end position="90"/>
    </location>
    <ligand>
        <name>GTP</name>
        <dbReference type="ChEBI" id="CHEBI:37565"/>
    </ligand>
</feature>
<feature type="binding site" evidence="1">
    <location>
        <begin position="140"/>
        <end position="143"/>
    </location>
    <ligand>
        <name>GTP</name>
        <dbReference type="ChEBI" id="CHEBI:37565"/>
    </ligand>
</feature>
<protein>
    <recommendedName>
        <fullName evidence="1">Elongation factor G</fullName>
        <shortName evidence="1">EF-G</shortName>
    </recommendedName>
</protein>
<accession>Q8UE15</accession>
<proteinExistence type="inferred from homology"/>